<keyword id="KW-0548">Nucleotidyltransferase</keyword>
<keyword id="KW-1185">Reference proteome</keyword>
<keyword id="KW-0694">RNA-binding</keyword>
<keyword id="KW-0698">rRNA processing</keyword>
<keyword id="KW-0808">Transferase</keyword>
<keyword id="KW-0819">tRNA processing</keyword>
<keyword id="KW-0820">tRNA-binding</keyword>
<evidence type="ECO:0000255" key="1">
    <source>
        <dbReference type="HAMAP-Rule" id="MF_00564"/>
    </source>
</evidence>
<organism>
    <name type="scientific">Nostoc sp. (strain PCC 7120 / SAG 25.82 / UTEX 2576)</name>
    <dbReference type="NCBI Taxonomy" id="103690"/>
    <lineage>
        <taxon>Bacteria</taxon>
        <taxon>Bacillati</taxon>
        <taxon>Cyanobacteriota</taxon>
        <taxon>Cyanophyceae</taxon>
        <taxon>Nostocales</taxon>
        <taxon>Nostocaceae</taxon>
        <taxon>Nostoc</taxon>
    </lineage>
</organism>
<accession>Q8Z0M2</accession>
<protein>
    <recommendedName>
        <fullName evidence="1">Ribonuclease PH</fullName>
        <shortName evidence="1">RNase PH</shortName>
        <ecNumber evidence="1">2.7.7.56</ecNumber>
    </recommendedName>
    <alternativeName>
        <fullName evidence="1">tRNA nucleotidyltransferase</fullName>
    </alternativeName>
</protein>
<reference key="1">
    <citation type="journal article" date="2001" name="DNA Res.">
        <title>Complete genomic sequence of the filamentous nitrogen-fixing cyanobacterium Anabaena sp. strain PCC 7120.</title>
        <authorList>
            <person name="Kaneko T."/>
            <person name="Nakamura Y."/>
            <person name="Wolk C.P."/>
            <person name="Kuritz T."/>
            <person name="Sasamoto S."/>
            <person name="Watanabe A."/>
            <person name="Iriguchi M."/>
            <person name="Ishikawa A."/>
            <person name="Kawashima K."/>
            <person name="Kimura T."/>
            <person name="Kishida Y."/>
            <person name="Kohara M."/>
            <person name="Matsumoto M."/>
            <person name="Matsuno A."/>
            <person name="Muraki A."/>
            <person name="Nakazaki N."/>
            <person name="Shimpo S."/>
            <person name="Sugimoto M."/>
            <person name="Takazawa M."/>
            <person name="Yamada M."/>
            <person name="Yasuda M."/>
            <person name="Tabata S."/>
        </authorList>
    </citation>
    <scope>NUCLEOTIDE SEQUENCE [LARGE SCALE GENOMIC DNA]</scope>
    <source>
        <strain>PCC 7120 / SAG 25.82 / UTEX 2576</strain>
    </source>
</reference>
<proteinExistence type="inferred from homology"/>
<feature type="chain" id="PRO_0000139860" description="Ribonuclease PH">
    <location>
        <begin position="1"/>
        <end position="247"/>
    </location>
</feature>
<feature type="binding site" evidence="1">
    <location>
        <position position="87"/>
    </location>
    <ligand>
        <name>phosphate</name>
        <dbReference type="ChEBI" id="CHEBI:43474"/>
        <note>substrate</note>
    </ligand>
</feature>
<feature type="binding site" evidence="1">
    <location>
        <begin position="125"/>
        <end position="127"/>
    </location>
    <ligand>
        <name>phosphate</name>
        <dbReference type="ChEBI" id="CHEBI:43474"/>
        <note>substrate</note>
    </ligand>
</feature>
<gene>
    <name evidence="1" type="primary">rph</name>
    <name type="ordered locus">alr0069</name>
</gene>
<name>RNPH_NOSS1</name>
<comment type="function">
    <text evidence="1">Phosphorolytic 3'-5' exoribonuclease that plays an important role in tRNA 3'-end maturation. Removes nucleotide residues following the 3'-CCA terminus of tRNAs; can also add nucleotides to the ends of RNA molecules by using nucleoside diphosphates as substrates, but this may not be physiologically important. Probably plays a role in initiation of 16S rRNA degradation (leading to ribosome degradation) during starvation.</text>
</comment>
<comment type="catalytic activity">
    <reaction evidence="1">
        <text>tRNA(n+1) + phosphate = tRNA(n) + a ribonucleoside 5'-diphosphate</text>
        <dbReference type="Rhea" id="RHEA:10628"/>
        <dbReference type="Rhea" id="RHEA-COMP:17343"/>
        <dbReference type="Rhea" id="RHEA-COMP:17344"/>
        <dbReference type="ChEBI" id="CHEBI:43474"/>
        <dbReference type="ChEBI" id="CHEBI:57930"/>
        <dbReference type="ChEBI" id="CHEBI:173114"/>
        <dbReference type="EC" id="2.7.7.56"/>
    </reaction>
</comment>
<comment type="subunit">
    <text evidence="1">Homohexameric ring arranged as a trimer of dimers.</text>
</comment>
<comment type="similarity">
    <text evidence="1">Belongs to the RNase PH family.</text>
</comment>
<sequence length="247" mass="27152">MVWQRPDGRKPYELRPINFHTKFTRFAPGSVLTICGETKVLCTVSVAESVPKFLTGSGKGWLTAEYRMLPSATQQRHERELLKLSGRTQEIQRLIGRSLRAALDFEALGERTLTVDADVLQADAGTRTAAITGGFVALAEAISQLLQRGVLERSPLCGQIAAVSVGLLEQEAYLDLNYIEDVAATVDFNVVMNKNLGIIEVQGTAEEGSFSRTQLNQLLDCAETGIQQLLIAQQQAITDWDRLFVGK</sequence>
<dbReference type="EC" id="2.7.7.56" evidence="1"/>
<dbReference type="EMBL" id="BA000019">
    <property type="protein sequence ID" value="BAB77593.1"/>
    <property type="molecule type" value="Genomic_DNA"/>
</dbReference>
<dbReference type="PIR" id="AE1815">
    <property type="entry name" value="AE1815"/>
</dbReference>
<dbReference type="RefSeq" id="WP_010994246.1">
    <property type="nucleotide sequence ID" value="NZ_RSCN01000016.1"/>
</dbReference>
<dbReference type="SMR" id="Q8Z0M2"/>
<dbReference type="STRING" id="103690.gene:10492073"/>
<dbReference type="KEGG" id="ana:alr0069"/>
<dbReference type="eggNOG" id="COG0689">
    <property type="taxonomic scope" value="Bacteria"/>
</dbReference>
<dbReference type="OrthoDB" id="9802265at2"/>
<dbReference type="Proteomes" id="UP000002483">
    <property type="component" value="Chromosome"/>
</dbReference>
<dbReference type="GO" id="GO:0000175">
    <property type="term" value="F:3'-5'-RNA exonuclease activity"/>
    <property type="evidence" value="ECO:0007669"/>
    <property type="project" value="UniProtKB-UniRule"/>
</dbReference>
<dbReference type="GO" id="GO:0000049">
    <property type="term" value="F:tRNA binding"/>
    <property type="evidence" value="ECO:0007669"/>
    <property type="project" value="UniProtKB-UniRule"/>
</dbReference>
<dbReference type="GO" id="GO:0009022">
    <property type="term" value="F:tRNA nucleotidyltransferase activity"/>
    <property type="evidence" value="ECO:0007669"/>
    <property type="project" value="UniProtKB-UniRule"/>
</dbReference>
<dbReference type="GO" id="GO:0016075">
    <property type="term" value="P:rRNA catabolic process"/>
    <property type="evidence" value="ECO:0007669"/>
    <property type="project" value="UniProtKB-UniRule"/>
</dbReference>
<dbReference type="GO" id="GO:0006364">
    <property type="term" value="P:rRNA processing"/>
    <property type="evidence" value="ECO:0007669"/>
    <property type="project" value="UniProtKB-KW"/>
</dbReference>
<dbReference type="GO" id="GO:0008033">
    <property type="term" value="P:tRNA processing"/>
    <property type="evidence" value="ECO:0007669"/>
    <property type="project" value="UniProtKB-UniRule"/>
</dbReference>
<dbReference type="FunFam" id="3.30.230.70:FF:000003">
    <property type="entry name" value="Ribonuclease PH"/>
    <property type="match status" value="1"/>
</dbReference>
<dbReference type="Gene3D" id="3.30.230.70">
    <property type="entry name" value="GHMP Kinase, N-terminal domain"/>
    <property type="match status" value="1"/>
</dbReference>
<dbReference type="HAMAP" id="MF_00564">
    <property type="entry name" value="RNase_PH"/>
    <property type="match status" value="1"/>
</dbReference>
<dbReference type="InterPro" id="IPR001247">
    <property type="entry name" value="ExoRNase_PH_dom1"/>
</dbReference>
<dbReference type="InterPro" id="IPR015847">
    <property type="entry name" value="ExoRNase_PH_dom2"/>
</dbReference>
<dbReference type="InterPro" id="IPR036345">
    <property type="entry name" value="ExoRNase_PH_dom2_sf"/>
</dbReference>
<dbReference type="InterPro" id="IPR027408">
    <property type="entry name" value="PNPase/RNase_PH_dom_sf"/>
</dbReference>
<dbReference type="InterPro" id="IPR020568">
    <property type="entry name" value="Ribosomal_Su5_D2-typ_SF"/>
</dbReference>
<dbReference type="InterPro" id="IPR050080">
    <property type="entry name" value="RNase_PH"/>
</dbReference>
<dbReference type="InterPro" id="IPR002381">
    <property type="entry name" value="RNase_PH_bac-type"/>
</dbReference>
<dbReference type="InterPro" id="IPR018336">
    <property type="entry name" value="RNase_PH_CS"/>
</dbReference>
<dbReference type="NCBIfam" id="TIGR01966">
    <property type="entry name" value="RNasePH"/>
    <property type="match status" value="1"/>
</dbReference>
<dbReference type="PANTHER" id="PTHR11953">
    <property type="entry name" value="EXOSOME COMPLEX COMPONENT"/>
    <property type="match status" value="1"/>
</dbReference>
<dbReference type="PANTHER" id="PTHR11953:SF0">
    <property type="entry name" value="EXOSOME COMPLEX COMPONENT RRP41"/>
    <property type="match status" value="1"/>
</dbReference>
<dbReference type="Pfam" id="PF01138">
    <property type="entry name" value="RNase_PH"/>
    <property type="match status" value="1"/>
</dbReference>
<dbReference type="Pfam" id="PF03725">
    <property type="entry name" value="RNase_PH_C"/>
    <property type="match status" value="1"/>
</dbReference>
<dbReference type="SUPFAM" id="SSF55666">
    <property type="entry name" value="Ribonuclease PH domain 2-like"/>
    <property type="match status" value="1"/>
</dbReference>
<dbReference type="SUPFAM" id="SSF54211">
    <property type="entry name" value="Ribosomal protein S5 domain 2-like"/>
    <property type="match status" value="1"/>
</dbReference>
<dbReference type="PROSITE" id="PS01277">
    <property type="entry name" value="RIBONUCLEASE_PH"/>
    <property type="match status" value="1"/>
</dbReference>